<sequence>MAATRVRCCHSNAAFTRLPLTRHRNSPTLPISLNRVDFPTLKKLSLPIGDGSSIRKVSGSGSRNIVRAVLEEKKTEAITEVDEKGITCVMKFGGSSVASAERMKEVADLILTFPEESPVIVLSAMGKTTNNLLLAGEKAVSCGVSNASEIEELSIIKELHIRTVKELNIDPSVILTYLEELEQLLKGIAMMKELTLRTRDYLVSFGECLSTRIFAAYLNTIGVKARQYDAFEIGFITTDDFTNGDILEATYPAVAKRLYDDWMHDPAVPIVTGFLGKGWKTGAVTTLGRGGSDLTATTIGKALGLKEIQVWKDVDGVLTCDPTIYKRATPVPYLTFDEAAELAYFGAQVLHPQSMRPAREGEIPVRVKNSYNPKAPGTIITKTRDMTKSILTSIVLKRNVTMLDIASTRMLGQVGFLAKVFSIFEELGISVDVVATSEVSISLTLDPSKLWSRELIQQELDHVVEELEKIAVVNLLKGRAIISLIGNVQHSSLILERAFHVLYTKGVNVQMISQGASKVNISFIVNEAEAEGCVQALHKSFFESGDLSELLIQPRLGNGSPVRTLQVEN</sequence>
<gene>
    <name type="primary">AK1</name>
    <name type="synonym">AK</name>
    <name type="synonym">AK-LYS1</name>
    <name type="ordered locus">At5g13280</name>
    <name type="ORF">T31B5.100</name>
</gene>
<name>AK1_ARATH</name>
<accession>Q9LYU8</accession>
<accession>O23152</accession>
<organism>
    <name type="scientific">Arabidopsis thaliana</name>
    <name type="common">Mouse-ear cress</name>
    <dbReference type="NCBI Taxonomy" id="3702"/>
    <lineage>
        <taxon>Eukaryota</taxon>
        <taxon>Viridiplantae</taxon>
        <taxon>Streptophyta</taxon>
        <taxon>Embryophyta</taxon>
        <taxon>Tracheophyta</taxon>
        <taxon>Spermatophyta</taxon>
        <taxon>Magnoliopsida</taxon>
        <taxon>eudicotyledons</taxon>
        <taxon>Gunneridae</taxon>
        <taxon>Pentapetalae</taxon>
        <taxon>rosids</taxon>
        <taxon>malvids</taxon>
        <taxon>Brassicales</taxon>
        <taxon>Brassicaceae</taxon>
        <taxon>Camelineae</taxon>
        <taxon>Arabidopsis</taxon>
    </lineage>
</organism>
<feature type="transit peptide" description="Chloroplast" evidence="2">
    <location>
        <begin position="1"/>
        <end position="90"/>
    </location>
</feature>
<feature type="chain" id="PRO_0000248157" description="Aspartokinase 1, chloroplastic">
    <location>
        <begin position="91"/>
        <end position="569"/>
    </location>
</feature>
<feature type="domain" description="ACT 1" evidence="3">
    <location>
        <begin position="405"/>
        <end position="483"/>
    </location>
</feature>
<feature type="domain" description="ACT 2" evidence="3">
    <location>
        <begin position="484"/>
        <end position="560"/>
    </location>
</feature>
<feature type="binding site" evidence="1">
    <location>
        <position position="91"/>
    </location>
    <ligand>
        <name>ATP</name>
        <dbReference type="ChEBI" id="CHEBI:30616"/>
    </ligand>
</feature>
<feature type="binding site" evidence="1">
    <location>
        <position position="94"/>
    </location>
    <ligand>
        <name>ATP</name>
        <dbReference type="ChEBI" id="CHEBI:30616"/>
    </ligand>
</feature>
<feature type="binding site" evidence="1">
    <location>
        <position position="123"/>
    </location>
    <ligand>
        <name>ATP</name>
        <dbReference type="ChEBI" id="CHEBI:30616"/>
    </ligand>
</feature>
<feature type="binding site">
    <location>
        <position position="207"/>
    </location>
    <ligand>
        <name>substrate</name>
    </ligand>
</feature>
<feature type="binding site">
    <location>
        <position position="413"/>
    </location>
    <ligand>
        <name>L-lysine</name>
        <dbReference type="ChEBI" id="CHEBI:32551"/>
        <note>allosteric effector</note>
    </ligand>
</feature>
<feature type="binding site">
    <location>
        <position position="415"/>
    </location>
    <ligand>
        <name>L-lysine</name>
        <dbReference type="ChEBI" id="CHEBI:32551"/>
        <note>allosteric effector</note>
    </ligand>
</feature>
<feature type="binding site">
    <location>
        <position position="430"/>
    </location>
    <ligand>
        <name>S-adenosyl-L-methionine</name>
        <dbReference type="ChEBI" id="CHEBI:59789"/>
        <note>allosteric effector</note>
    </ligand>
</feature>
<feature type="binding site">
    <location>
        <position position="431"/>
    </location>
    <ligand>
        <name>L-lysine</name>
        <dbReference type="ChEBI" id="CHEBI:32551"/>
        <note>allosteric effector</note>
    </ligand>
</feature>
<feature type="binding site">
    <location>
        <position position="432"/>
    </location>
    <ligand>
        <name>L-lysine</name>
        <dbReference type="ChEBI" id="CHEBI:32551"/>
        <note>allosteric effector</note>
    </ligand>
</feature>
<feature type="binding site">
    <location>
        <position position="437"/>
    </location>
    <ligand>
        <name>L-lysine</name>
        <dbReference type="ChEBI" id="CHEBI:32551"/>
        <note>allosteric effector</note>
    </ligand>
</feature>
<feature type="binding site">
    <location>
        <position position="452"/>
    </location>
    <ligand>
        <name>S-adenosyl-L-methionine</name>
        <dbReference type="ChEBI" id="CHEBI:59789"/>
        <note>allosteric effector</note>
    </ligand>
</feature>
<feature type="binding site">
    <location>
        <position position="453"/>
    </location>
    <ligand>
        <name>S-adenosyl-L-methionine</name>
        <dbReference type="ChEBI" id="CHEBI:59789"/>
        <note>allosteric effector</note>
    </ligand>
</feature>
<feature type="sequence conflict" description="In Ref. 1; CAA67376." evidence="7" ref="1">
    <original>N</original>
    <variation>S</variation>
    <location>
        <position position="369"/>
    </location>
</feature>
<feature type="sequence conflict" description="In Ref. 1; CAA67376." evidence="7" ref="1">
    <original>N</original>
    <variation>D</variation>
    <location>
        <position position="569"/>
    </location>
</feature>
<feature type="strand" evidence="8">
    <location>
        <begin position="88"/>
        <end position="92"/>
    </location>
</feature>
<feature type="helix" evidence="8">
    <location>
        <begin position="95"/>
        <end position="97"/>
    </location>
</feature>
<feature type="helix" evidence="8">
    <location>
        <begin position="100"/>
        <end position="112"/>
    </location>
</feature>
<feature type="strand" evidence="8">
    <location>
        <begin position="118"/>
        <end position="122"/>
    </location>
</feature>
<feature type="helix" evidence="8">
    <location>
        <begin position="128"/>
        <end position="139"/>
    </location>
</feature>
<feature type="turn" evidence="8">
    <location>
        <begin position="140"/>
        <end position="142"/>
    </location>
</feature>
<feature type="turn" evidence="8">
    <location>
        <begin position="144"/>
        <end position="146"/>
    </location>
</feature>
<feature type="helix" evidence="8">
    <location>
        <begin position="147"/>
        <end position="149"/>
    </location>
</feature>
<feature type="helix" evidence="8">
    <location>
        <begin position="151"/>
        <end position="167"/>
    </location>
</feature>
<feature type="helix" evidence="8">
    <location>
        <begin position="172"/>
        <end position="191"/>
    </location>
</feature>
<feature type="helix" evidence="8">
    <location>
        <begin position="196"/>
        <end position="220"/>
    </location>
</feature>
<feature type="strand" evidence="8">
    <location>
        <begin position="225"/>
        <end position="228"/>
    </location>
</feature>
<feature type="helix" evidence="8">
    <location>
        <begin position="230"/>
        <end position="232"/>
    </location>
</feature>
<feature type="helix" evidence="8">
    <location>
        <begin position="250"/>
        <end position="264"/>
    </location>
</feature>
<feature type="strand" evidence="8">
    <location>
        <begin position="268"/>
        <end position="278"/>
    </location>
</feature>
<feature type="turn" evidence="8">
    <location>
        <begin position="279"/>
        <end position="281"/>
    </location>
</feature>
<feature type="strand" evidence="8">
    <location>
        <begin position="284"/>
        <end position="286"/>
    </location>
</feature>
<feature type="helix" evidence="8">
    <location>
        <begin position="291"/>
        <end position="303"/>
    </location>
</feature>
<feature type="strand" evidence="8">
    <location>
        <begin position="308"/>
        <end position="320"/>
    </location>
</feature>
<feature type="turn" evidence="8">
    <location>
        <begin position="322"/>
        <end position="324"/>
    </location>
</feature>
<feature type="strand" evidence="8">
    <location>
        <begin position="333"/>
        <end position="335"/>
    </location>
</feature>
<feature type="helix" evidence="8">
    <location>
        <begin position="336"/>
        <end position="346"/>
    </location>
</feature>
<feature type="helix" evidence="8">
    <location>
        <begin position="352"/>
        <end position="361"/>
    </location>
</feature>
<feature type="strand" evidence="8">
    <location>
        <begin position="365"/>
        <end position="369"/>
    </location>
</feature>
<feature type="strand" evidence="8">
    <location>
        <begin position="378"/>
        <end position="382"/>
    </location>
</feature>
<feature type="strand" evidence="8">
    <location>
        <begin position="391"/>
        <end position="406"/>
    </location>
</feature>
<feature type="helix" evidence="8">
    <location>
        <begin position="408"/>
        <end position="410"/>
    </location>
</feature>
<feature type="helix" evidence="8">
    <location>
        <begin position="416"/>
        <end position="426"/>
    </location>
</feature>
<feature type="strand" evidence="8">
    <location>
        <begin position="431"/>
        <end position="437"/>
    </location>
</feature>
<feature type="strand" evidence="8">
    <location>
        <begin position="440"/>
        <end position="445"/>
    </location>
</feature>
<feature type="helix" evidence="8">
    <location>
        <begin position="448"/>
        <end position="450"/>
    </location>
</feature>
<feature type="strand" evidence="8">
    <location>
        <begin position="451"/>
        <end position="453"/>
    </location>
</feature>
<feature type="helix" evidence="8">
    <location>
        <begin position="457"/>
        <end position="467"/>
    </location>
</feature>
<feature type="turn" evidence="8">
    <location>
        <begin position="468"/>
        <end position="470"/>
    </location>
</feature>
<feature type="strand" evidence="8">
    <location>
        <begin position="471"/>
        <end position="486"/>
    </location>
</feature>
<feature type="helix" evidence="8">
    <location>
        <begin position="488"/>
        <end position="490"/>
    </location>
</feature>
<feature type="helix" evidence="8">
    <location>
        <begin position="491"/>
        <end position="505"/>
    </location>
</feature>
<feature type="strand" evidence="8">
    <location>
        <begin position="510"/>
        <end position="514"/>
    </location>
</feature>
<feature type="strand" evidence="8">
    <location>
        <begin position="519"/>
        <end position="526"/>
    </location>
</feature>
<feature type="helix" evidence="8">
    <location>
        <begin position="527"/>
        <end position="542"/>
    </location>
</feature>
<comment type="function">
    <text>Involved in the first step of essential amino acids lysine, threonine, methionine and isoleucine synthesis via the aspartate-family pathway.</text>
</comment>
<comment type="catalytic activity">
    <reaction>
        <text>L-aspartate + ATP = 4-phospho-L-aspartate + ADP</text>
        <dbReference type="Rhea" id="RHEA:23776"/>
        <dbReference type="ChEBI" id="CHEBI:29991"/>
        <dbReference type="ChEBI" id="CHEBI:30616"/>
        <dbReference type="ChEBI" id="CHEBI:57535"/>
        <dbReference type="ChEBI" id="CHEBI:456216"/>
        <dbReference type="EC" id="2.7.2.4"/>
    </reaction>
</comment>
<comment type="activity regulation">
    <text evidence="5 6">Inhibited by S-adenosyl-L-methionine (SAM) and lysine in a synergistic manner. No inhibition by threonine, leucine or SAM alone, and no activation or inhibition by alanine, cysteine, isoleucine, serine, valine, methionine, glutamine, asparagine, glutamic acid or arginine.</text>
</comment>
<comment type="biophysicochemical properties">
    <kinetics>
        <KM evidence="5">1700 uM for ATP</KM>
        <KM evidence="5">2037 uM for aspartate</KM>
        <text>K(cat) is 23.4/sec.</text>
    </kinetics>
</comment>
<comment type="pathway">
    <text>Amino-acid biosynthesis; L-lysine biosynthesis via DAP pathway; (S)-tetrahydrodipicolinate from L-aspartate: step 1/4.</text>
</comment>
<comment type="pathway">
    <text>Amino-acid biosynthesis; L-methionine biosynthesis via de novo pathway; L-homoserine from L-aspartate: step 1/3.</text>
</comment>
<comment type="pathway">
    <text>Amino-acid biosynthesis; L-threonine biosynthesis; L-threonine from L-aspartate: step 1/5.</text>
</comment>
<comment type="subunit">
    <text evidence="4">Homodimer.</text>
</comment>
<comment type="subcellular location">
    <subcellularLocation>
        <location evidence="7">Plastid</location>
        <location evidence="7">Chloroplast</location>
    </subcellularLocation>
</comment>
<comment type="miscellaneous">
    <text>Only one ACT domain (ACT1) is implicated in effector binding.</text>
</comment>
<comment type="similarity">
    <text evidence="7">Belongs to the aspartokinase family.</text>
</comment>
<dbReference type="EC" id="2.7.2.4"/>
<dbReference type="EMBL" id="X98873">
    <property type="protein sequence ID" value="CAA67376.1"/>
    <property type="molecule type" value="mRNA"/>
</dbReference>
<dbReference type="EMBL" id="AL163491">
    <property type="protein sequence ID" value="CAB86635.1"/>
    <property type="molecule type" value="Genomic_DNA"/>
</dbReference>
<dbReference type="EMBL" id="CP002688">
    <property type="protein sequence ID" value="AED91874.1"/>
    <property type="molecule type" value="Genomic_DNA"/>
</dbReference>
<dbReference type="EMBL" id="BT000493">
    <property type="protein sequence ID" value="AAN18062.1"/>
    <property type="molecule type" value="mRNA"/>
</dbReference>
<dbReference type="EMBL" id="AY057674">
    <property type="protein sequence ID" value="AAL15305.1"/>
    <property type="molecule type" value="mRNA"/>
</dbReference>
<dbReference type="PIR" id="T48575">
    <property type="entry name" value="T48575"/>
</dbReference>
<dbReference type="RefSeq" id="NP_196832.1">
    <property type="nucleotide sequence ID" value="NM_121331.3"/>
</dbReference>
<dbReference type="PDB" id="2CDQ">
    <property type="method" value="X-ray"/>
    <property type="resolution" value="2.85 A"/>
    <property type="chains" value="A/B=61-569"/>
</dbReference>
<dbReference type="PDBsum" id="2CDQ"/>
<dbReference type="SMR" id="Q9LYU8"/>
<dbReference type="BioGRID" id="16447">
    <property type="interactions" value="5"/>
</dbReference>
<dbReference type="FunCoup" id="Q9LYU8">
    <property type="interactions" value="1648"/>
</dbReference>
<dbReference type="IntAct" id="Q9LYU8">
    <property type="interactions" value="5"/>
</dbReference>
<dbReference type="STRING" id="3702.Q9LYU8"/>
<dbReference type="iPTMnet" id="Q9LYU8"/>
<dbReference type="MetOSite" id="Q9LYU8"/>
<dbReference type="PaxDb" id="3702-AT5G13280.1"/>
<dbReference type="ProteomicsDB" id="244922"/>
<dbReference type="EnsemblPlants" id="AT5G13280.1">
    <property type="protein sequence ID" value="AT5G13280.1"/>
    <property type="gene ID" value="AT5G13280"/>
</dbReference>
<dbReference type="GeneID" id="831169"/>
<dbReference type="Gramene" id="AT5G13280.1">
    <property type="protein sequence ID" value="AT5G13280.1"/>
    <property type="gene ID" value="AT5G13280"/>
</dbReference>
<dbReference type="KEGG" id="ath:AT5G13280"/>
<dbReference type="Araport" id="AT5G13280"/>
<dbReference type="TAIR" id="AT5G13280">
    <property type="gene designation" value="AK-LYS1"/>
</dbReference>
<dbReference type="eggNOG" id="KOG0456">
    <property type="taxonomic scope" value="Eukaryota"/>
</dbReference>
<dbReference type="HOGENOM" id="CLU_009116_6_1_1"/>
<dbReference type="InParanoid" id="Q9LYU8"/>
<dbReference type="OMA" id="DNINIMM"/>
<dbReference type="OrthoDB" id="4323675at2759"/>
<dbReference type="PhylomeDB" id="Q9LYU8"/>
<dbReference type="BioCyc" id="ARA:AT5G13280-MONOMER"/>
<dbReference type="BRENDA" id="2.7.2.4">
    <property type="organism ID" value="399"/>
</dbReference>
<dbReference type="SABIO-RK" id="Q9LYU8"/>
<dbReference type="UniPathway" id="UPA00034">
    <property type="reaction ID" value="UER00015"/>
</dbReference>
<dbReference type="UniPathway" id="UPA00050">
    <property type="reaction ID" value="UER00461"/>
</dbReference>
<dbReference type="UniPathway" id="UPA00051">
    <property type="reaction ID" value="UER00462"/>
</dbReference>
<dbReference type="EvolutionaryTrace" id="Q9LYU8"/>
<dbReference type="PRO" id="PR:Q9LYU8"/>
<dbReference type="Proteomes" id="UP000006548">
    <property type="component" value="Chromosome 5"/>
</dbReference>
<dbReference type="ExpressionAtlas" id="Q9LYU8">
    <property type="expression patterns" value="baseline and differential"/>
</dbReference>
<dbReference type="GO" id="GO:0009570">
    <property type="term" value="C:chloroplast stroma"/>
    <property type="evidence" value="ECO:0007005"/>
    <property type="project" value="TAIR"/>
</dbReference>
<dbReference type="GO" id="GO:0004072">
    <property type="term" value="F:aspartate kinase activity"/>
    <property type="evidence" value="ECO:0000250"/>
    <property type="project" value="TAIR"/>
</dbReference>
<dbReference type="GO" id="GO:0005524">
    <property type="term" value="F:ATP binding"/>
    <property type="evidence" value="ECO:0007669"/>
    <property type="project" value="UniProtKB-KW"/>
</dbReference>
<dbReference type="GO" id="GO:0008652">
    <property type="term" value="P:amino acid biosynthetic process"/>
    <property type="evidence" value="ECO:0000304"/>
    <property type="project" value="TAIR"/>
</dbReference>
<dbReference type="GO" id="GO:0009089">
    <property type="term" value="P:lysine biosynthetic process via diaminopimelate"/>
    <property type="evidence" value="ECO:0007669"/>
    <property type="project" value="UniProtKB-UniPathway"/>
</dbReference>
<dbReference type="GO" id="GO:0009088">
    <property type="term" value="P:threonine biosynthetic process"/>
    <property type="evidence" value="ECO:0007669"/>
    <property type="project" value="UniProtKB-UniPathway"/>
</dbReference>
<dbReference type="CDD" id="cd04244">
    <property type="entry name" value="AAK_AK-LysC-like"/>
    <property type="match status" value="1"/>
</dbReference>
<dbReference type="CDD" id="cd04933">
    <property type="entry name" value="ACT_AK1-AT_1"/>
    <property type="match status" value="1"/>
</dbReference>
<dbReference type="CDD" id="cd04918">
    <property type="entry name" value="ACT_AK1-AT_2"/>
    <property type="match status" value="1"/>
</dbReference>
<dbReference type="FunFam" id="1.20.120.1320:FF:000001">
    <property type="entry name" value="Aspartokinase"/>
    <property type="match status" value="1"/>
</dbReference>
<dbReference type="FunFam" id="3.30.70.260:FF:000016">
    <property type="entry name" value="Aspartokinase"/>
    <property type="match status" value="1"/>
</dbReference>
<dbReference type="FunFam" id="3.40.1160.10:FF:000012">
    <property type="entry name" value="Aspartokinase"/>
    <property type="match status" value="1"/>
</dbReference>
<dbReference type="FunFam" id="3.30.70.260:FF:000020">
    <property type="entry name" value="Aspartokinase 1"/>
    <property type="match status" value="1"/>
</dbReference>
<dbReference type="Gene3D" id="3.30.70.260">
    <property type="match status" value="2"/>
</dbReference>
<dbReference type="Gene3D" id="3.40.1160.10">
    <property type="entry name" value="Acetylglutamate kinase-like"/>
    <property type="match status" value="1"/>
</dbReference>
<dbReference type="Gene3D" id="1.20.120.1320">
    <property type="entry name" value="Aspartokinase, catalytic domain"/>
    <property type="match status" value="1"/>
</dbReference>
<dbReference type="InterPro" id="IPR036393">
    <property type="entry name" value="AceGlu_kinase-like_sf"/>
</dbReference>
<dbReference type="InterPro" id="IPR045865">
    <property type="entry name" value="ACT-like_dom_sf"/>
</dbReference>
<dbReference type="InterPro" id="IPR054352">
    <property type="entry name" value="ACT_Aspartokinase"/>
</dbReference>
<dbReference type="InterPro" id="IPR002912">
    <property type="entry name" value="ACT_dom"/>
</dbReference>
<dbReference type="InterPro" id="IPR041746">
    <property type="entry name" value="AK-LysC-like"/>
</dbReference>
<dbReference type="InterPro" id="IPR047896">
    <property type="entry name" value="AK1_ACT_1"/>
</dbReference>
<dbReference type="InterPro" id="IPR047895">
    <property type="entry name" value="AK1_ACT_2"/>
</dbReference>
<dbReference type="InterPro" id="IPR001048">
    <property type="entry name" value="Asp/Glu/Uridylate_kinase"/>
</dbReference>
<dbReference type="InterPro" id="IPR001341">
    <property type="entry name" value="Asp_kinase"/>
</dbReference>
<dbReference type="InterPro" id="IPR042199">
    <property type="entry name" value="AsparK_Bifunc_asparK/hSer_DH"/>
</dbReference>
<dbReference type="InterPro" id="IPR018042">
    <property type="entry name" value="Aspartate_kinase_CS"/>
</dbReference>
<dbReference type="NCBIfam" id="TIGR00657">
    <property type="entry name" value="asp_kinases"/>
    <property type="match status" value="1"/>
</dbReference>
<dbReference type="PANTHER" id="PTHR21499">
    <property type="entry name" value="ASPARTATE KINASE"/>
    <property type="match status" value="1"/>
</dbReference>
<dbReference type="PANTHER" id="PTHR21499:SF58">
    <property type="entry name" value="ASPARTOKINASE 1, CHLOROPLASTIC"/>
    <property type="match status" value="1"/>
</dbReference>
<dbReference type="Pfam" id="PF00696">
    <property type="entry name" value="AA_kinase"/>
    <property type="match status" value="1"/>
</dbReference>
<dbReference type="Pfam" id="PF22468">
    <property type="entry name" value="ACT_9"/>
    <property type="match status" value="1"/>
</dbReference>
<dbReference type="SUPFAM" id="SSF55021">
    <property type="entry name" value="ACT-like"/>
    <property type="match status" value="2"/>
</dbReference>
<dbReference type="SUPFAM" id="SSF53633">
    <property type="entry name" value="Carbamate kinase-like"/>
    <property type="match status" value="1"/>
</dbReference>
<dbReference type="PROSITE" id="PS51671">
    <property type="entry name" value="ACT"/>
    <property type="match status" value="1"/>
</dbReference>
<dbReference type="PROSITE" id="PS00324">
    <property type="entry name" value="ASPARTOKINASE"/>
    <property type="match status" value="1"/>
</dbReference>
<keyword id="KW-0002">3D-structure</keyword>
<keyword id="KW-0028">Amino-acid biosynthesis</keyword>
<keyword id="KW-0067">ATP-binding</keyword>
<keyword id="KW-0150">Chloroplast</keyword>
<keyword id="KW-0418">Kinase</keyword>
<keyword id="KW-0547">Nucleotide-binding</keyword>
<keyword id="KW-0934">Plastid</keyword>
<keyword id="KW-1185">Reference proteome</keyword>
<keyword id="KW-0677">Repeat</keyword>
<keyword id="KW-0791">Threonine biosynthesis</keyword>
<keyword id="KW-0808">Transferase</keyword>
<keyword id="KW-0809">Transit peptide</keyword>
<evidence type="ECO:0000250" key="1"/>
<evidence type="ECO:0000255" key="2"/>
<evidence type="ECO:0000255" key="3">
    <source>
        <dbReference type="PROSITE-ProRule" id="PRU01007"/>
    </source>
</evidence>
<evidence type="ECO:0000269" key="4">
    <source>
    </source>
</evidence>
<evidence type="ECO:0000269" key="5">
    <source>
    </source>
</evidence>
<evidence type="ECO:0000269" key="6">
    <source>
    </source>
</evidence>
<evidence type="ECO:0000305" key="7"/>
<evidence type="ECO:0007829" key="8">
    <source>
        <dbReference type="PDB" id="2CDQ"/>
    </source>
</evidence>
<protein>
    <recommendedName>
        <fullName>Aspartokinase 1, chloroplastic</fullName>
        <ecNumber>2.7.2.4</ecNumber>
    </recommendedName>
    <alternativeName>
        <fullName>Aspartate kinase 1</fullName>
    </alternativeName>
</protein>
<proteinExistence type="evidence at protein level"/>
<reference key="1">
    <citation type="journal article" date="1997" name="Plant Mol. Biol.">
        <title>Molecular characterisation of an Arabidopsis thaliana cDNA coding for a monofunctional aspartate kinase.</title>
        <authorList>
            <person name="Frankard V."/>
            <person name="Vauterin M."/>
            <person name="Jacobs M."/>
        </authorList>
    </citation>
    <scope>NUCLEOTIDE SEQUENCE [MRNA]</scope>
    <source>
        <strain>cv. Columbia</strain>
    </source>
</reference>
<reference key="2">
    <citation type="journal article" date="2000" name="Nature">
        <title>Sequence and analysis of chromosome 5 of the plant Arabidopsis thaliana.</title>
        <authorList>
            <person name="Tabata S."/>
            <person name="Kaneko T."/>
            <person name="Nakamura Y."/>
            <person name="Kotani H."/>
            <person name="Kato T."/>
            <person name="Asamizu E."/>
            <person name="Miyajima N."/>
            <person name="Sasamoto S."/>
            <person name="Kimura T."/>
            <person name="Hosouchi T."/>
            <person name="Kawashima K."/>
            <person name="Kohara M."/>
            <person name="Matsumoto M."/>
            <person name="Matsuno A."/>
            <person name="Muraki A."/>
            <person name="Nakayama S."/>
            <person name="Nakazaki N."/>
            <person name="Naruo K."/>
            <person name="Okumura S."/>
            <person name="Shinpo S."/>
            <person name="Takeuchi C."/>
            <person name="Wada T."/>
            <person name="Watanabe A."/>
            <person name="Yamada M."/>
            <person name="Yasuda M."/>
            <person name="Sato S."/>
            <person name="de la Bastide M."/>
            <person name="Huang E."/>
            <person name="Spiegel L."/>
            <person name="Gnoj L."/>
            <person name="O'Shaughnessy A."/>
            <person name="Preston R."/>
            <person name="Habermann K."/>
            <person name="Murray J."/>
            <person name="Johnson D."/>
            <person name="Rohlfing T."/>
            <person name="Nelson J."/>
            <person name="Stoneking T."/>
            <person name="Pepin K."/>
            <person name="Spieth J."/>
            <person name="Sekhon M."/>
            <person name="Armstrong J."/>
            <person name="Becker M."/>
            <person name="Belter E."/>
            <person name="Cordum H."/>
            <person name="Cordes M."/>
            <person name="Courtney L."/>
            <person name="Courtney W."/>
            <person name="Dante M."/>
            <person name="Du H."/>
            <person name="Edwards J."/>
            <person name="Fryman J."/>
            <person name="Haakensen B."/>
            <person name="Lamar E."/>
            <person name="Latreille P."/>
            <person name="Leonard S."/>
            <person name="Meyer R."/>
            <person name="Mulvaney E."/>
            <person name="Ozersky P."/>
            <person name="Riley A."/>
            <person name="Strowmatt C."/>
            <person name="Wagner-McPherson C."/>
            <person name="Wollam A."/>
            <person name="Yoakum M."/>
            <person name="Bell M."/>
            <person name="Dedhia N."/>
            <person name="Parnell L."/>
            <person name="Shah R."/>
            <person name="Rodriguez M."/>
            <person name="Hoon See L."/>
            <person name="Vil D."/>
            <person name="Baker J."/>
            <person name="Kirchoff K."/>
            <person name="Toth K."/>
            <person name="King L."/>
            <person name="Bahret A."/>
            <person name="Miller B."/>
            <person name="Marra M.A."/>
            <person name="Martienssen R."/>
            <person name="McCombie W.R."/>
            <person name="Wilson R.K."/>
            <person name="Murphy G."/>
            <person name="Bancroft I."/>
            <person name="Volckaert G."/>
            <person name="Wambutt R."/>
            <person name="Duesterhoeft A."/>
            <person name="Stiekema W."/>
            <person name="Pohl T."/>
            <person name="Entian K.-D."/>
            <person name="Terryn N."/>
            <person name="Hartley N."/>
            <person name="Bent E."/>
            <person name="Johnson S."/>
            <person name="Langham S.-A."/>
            <person name="McCullagh B."/>
            <person name="Robben J."/>
            <person name="Grymonprez B."/>
            <person name="Zimmermann W."/>
            <person name="Ramsperger U."/>
            <person name="Wedler H."/>
            <person name="Balke K."/>
            <person name="Wedler E."/>
            <person name="Peters S."/>
            <person name="van Staveren M."/>
            <person name="Dirkse W."/>
            <person name="Mooijman P."/>
            <person name="Klein Lankhorst R."/>
            <person name="Weitzenegger T."/>
            <person name="Bothe G."/>
            <person name="Rose M."/>
            <person name="Hauf J."/>
            <person name="Berneiser S."/>
            <person name="Hempel S."/>
            <person name="Feldpausch M."/>
            <person name="Lamberth S."/>
            <person name="Villarroel R."/>
            <person name="Gielen J."/>
            <person name="Ardiles W."/>
            <person name="Bents O."/>
            <person name="Lemcke K."/>
            <person name="Kolesov G."/>
            <person name="Mayer K.F.X."/>
            <person name="Rudd S."/>
            <person name="Schoof H."/>
            <person name="Schueller C."/>
            <person name="Zaccaria P."/>
            <person name="Mewes H.-W."/>
            <person name="Bevan M."/>
            <person name="Fransz P.F."/>
        </authorList>
    </citation>
    <scope>NUCLEOTIDE SEQUENCE [LARGE SCALE GENOMIC DNA]</scope>
    <source>
        <strain>cv. Columbia</strain>
    </source>
</reference>
<reference key="3">
    <citation type="journal article" date="2017" name="Plant J.">
        <title>Araport11: a complete reannotation of the Arabidopsis thaliana reference genome.</title>
        <authorList>
            <person name="Cheng C.Y."/>
            <person name="Krishnakumar V."/>
            <person name="Chan A.P."/>
            <person name="Thibaud-Nissen F."/>
            <person name="Schobel S."/>
            <person name="Town C.D."/>
        </authorList>
    </citation>
    <scope>GENOME REANNOTATION</scope>
    <source>
        <strain>cv. Columbia</strain>
    </source>
</reference>
<reference key="4">
    <citation type="journal article" date="2003" name="Science">
        <title>Empirical analysis of transcriptional activity in the Arabidopsis genome.</title>
        <authorList>
            <person name="Yamada K."/>
            <person name="Lim J."/>
            <person name="Dale J.M."/>
            <person name="Chen H."/>
            <person name="Shinn P."/>
            <person name="Palm C.J."/>
            <person name="Southwick A.M."/>
            <person name="Wu H.C."/>
            <person name="Kim C.J."/>
            <person name="Nguyen M."/>
            <person name="Pham P.K."/>
            <person name="Cheuk R.F."/>
            <person name="Karlin-Newmann G."/>
            <person name="Liu S.X."/>
            <person name="Lam B."/>
            <person name="Sakano H."/>
            <person name="Wu T."/>
            <person name="Yu G."/>
            <person name="Miranda M."/>
            <person name="Quach H.L."/>
            <person name="Tripp M."/>
            <person name="Chang C.H."/>
            <person name="Lee J.M."/>
            <person name="Toriumi M.J."/>
            <person name="Chan M.M."/>
            <person name="Tang C.C."/>
            <person name="Onodera C.S."/>
            <person name="Deng J.M."/>
            <person name="Akiyama K."/>
            <person name="Ansari Y."/>
            <person name="Arakawa T."/>
            <person name="Banh J."/>
            <person name="Banno F."/>
            <person name="Bowser L."/>
            <person name="Brooks S.Y."/>
            <person name="Carninci P."/>
            <person name="Chao Q."/>
            <person name="Choy N."/>
            <person name="Enju A."/>
            <person name="Goldsmith A.D."/>
            <person name="Gurjal M."/>
            <person name="Hansen N.F."/>
            <person name="Hayashizaki Y."/>
            <person name="Johnson-Hopson C."/>
            <person name="Hsuan V.W."/>
            <person name="Iida K."/>
            <person name="Karnes M."/>
            <person name="Khan S."/>
            <person name="Koesema E."/>
            <person name="Ishida J."/>
            <person name="Jiang P.X."/>
            <person name="Jones T."/>
            <person name="Kawai J."/>
            <person name="Kamiya A."/>
            <person name="Meyers C."/>
            <person name="Nakajima M."/>
            <person name="Narusaka M."/>
            <person name="Seki M."/>
            <person name="Sakurai T."/>
            <person name="Satou M."/>
            <person name="Tamse R."/>
            <person name="Vaysberg M."/>
            <person name="Wallender E.K."/>
            <person name="Wong C."/>
            <person name="Yamamura Y."/>
            <person name="Yuan S."/>
            <person name="Shinozaki K."/>
            <person name="Davis R.W."/>
            <person name="Theologis A."/>
            <person name="Ecker J.R."/>
        </authorList>
    </citation>
    <scope>NUCLEOTIDE SEQUENCE [LARGE SCALE MRNA]</scope>
    <source>
        <strain>cv. Columbia</strain>
    </source>
</reference>
<reference key="5">
    <citation type="journal article" date="1980" name="Nature">
        <title>S-adenosylmethionine -- a novel regulator of aspartate kinase.</title>
        <authorList>
            <person name="Rognes S.E."/>
            <person name="Lea P.J."/>
            <person name="Miflin B.J."/>
        </authorList>
    </citation>
    <scope>ACTIVITY REGULATION</scope>
</reference>
<reference key="6">
    <citation type="journal article" date="2007" name="FEBS J.">
        <title>Allosteric monofunctional aspartate kinases from Arabidopsis.</title>
        <authorList>
            <person name="Curien G."/>
            <person name="Laurencin M."/>
            <person name="Robert-Genthon M."/>
            <person name="Dumas R."/>
        </authorList>
    </citation>
    <scope>BIOPHYSICOCHEMICAL PROPERTIES</scope>
    <scope>ACTIVITY REGULATION</scope>
</reference>
<reference key="7">
    <citation type="journal article" date="2006" name="Plant Cell">
        <title>A novel organization of ACT domains in allosteric enzymes revealed by the crystal structure of Arabidopsis aspartate kinase.</title>
        <authorList>
            <person name="Mas-Droux C."/>
            <person name="Curien G."/>
            <person name="Robert-Genthon M."/>
            <person name="Laurencin M."/>
            <person name="Ferrer J.L."/>
            <person name="Dumas R."/>
        </authorList>
    </citation>
    <scope>X-RAY CRYSTALLOGRAPHY (2.85 ANGSTROMS) OF 61-569 IN COMPLEX WITH SUBSTRATE ANALOG AND ALLOSTERIC REGULATORS</scope>
    <scope>SUBUNIT</scope>
</reference>